<proteinExistence type="inferred from homology"/>
<gene>
    <name evidence="1" type="primary">hspQ</name>
    <name type="ordered locus">YE1592</name>
</gene>
<sequence length="105" mass="11910">MIASKFGIGQQVRHRLHGYLGVVIDIDPEYSLEPPAPDEVANNDTLRLSPWYHVVIEDDEGQPVHTYLAEAQLTYEDMDAHPEQPSLDELAASIRHQLQAPRLRN</sequence>
<protein>
    <recommendedName>
        <fullName evidence="1">Heat shock protein HspQ</fullName>
    </recommendedName>
</protein>
<name>HSPQ_YERE8</name>
<reference key="1">
    <citation type="journal article" date="2006" name="PLoS Genet.">
        <title>The complete genome sequence and comparative genome analysis of the high pathogenicity Yersinia enterocolitica strain 8081.</title>
        <authorList>
            <person name="Thomson N.R."/>
            <person name="Howard S."/>
            <person name="Wren B.W."/>
            <person name="Holden M.T.G."/>
            <person name="Crossman L."/>
            <person name="Challis G.L."/>
            <person name="Churcher C."/>
            <person name="Mungall K."/>
            <person name="Brooks K."/>
            <person name="Chillingworth T."/>
            <person name="Feltwell T."/>
            <person name="Abdellah Z."/>
            <person name="Hauser H."/>
            <person name="Jagels K."/>
            <person name="Maddison M."/>
            <person name="Moule S."/>
            <person name="Sanders M."/>
            <person name="Whitehead S."/>
            <person name="Quail M.A."/>
            <person name="Dougan G."/>
            <person name="Parkhill J."/>
            <person name="Prentice M.B."/>
        </authorList>
    </citation>
    <scope>NUCLEOTIDE SEQUENCE [LARGE SCALE GENOMIC DNA]</scope>
    <source>
        <strain>NCTC 13174 / 8081</strain>
    </source>
</reference>
<evidence type="ECO:0000255" key="1">
    <source>
        <dbReference type="HAMAP-Rule" id="MF_01194"/>
    </source>
</evidence>
<organism>
    <name type="scientific">Yersinia enterocolitica serotype O:8 / biotype 1B (strain NCTC 13174 / 8081)</name>
    <dbReference type="NCBI Taxonomy" id="393305"/>
    <lineage>
        <taxon>Bacteria</taxon>
        <taxon>Pseudomonadati</taxon>
        <taxon>Pseudomonadota</taxon>
        <taxon>Gammaproteobacteria</taxon>
        <taxon>Enterobacterales</taxon>
        <taxon>Yersiniaceae</taxon>
        <taxon>Yersinia</taxon>
    </lineage>
</organism>
<feature type="chain" id="PRO_0000315319" description="Heat shock protein HspQ">
    <location>
        <begin position="1"/>
        <end position="105"/>
    </location>
</feature>
<comment type="function">
    <text evidence="1">Involved in the degradation of certain denaturated proteins, including DnaA, during heat shock stress.</text>
</comment>
<comment type="subcellular location">
    <subcellularLocation>
        <location evidence="1">Cytoplasm</location>
    </subcellularLocation>
</comment>
<comment type="similarity">
    <text evidence="1">Belongs to the HspQ family.</text>
</comment>
<keyword id="KW-0963">Cytoplasm</keyword>
<keyword id="KW-0346">Stress response</keyword>
<accession>A1JMW1</accession>
<dbReference type="EMBL" id="AM286415">
    <property type="protein sequence ID" value="CAL11669.1"/>
    <property type="molecule type" value="Genomic_DNA"/>
</dbReference>
<dbReference type="RefSeq" id="WP_005160102.1">
    <property type="nucleotide sequence ID" value="NC_008800.1"/>
</dbReference>
<dbReference type="RefSeq" id="YP_001005885.1">
    <property type="nucleotide sequence ID" value="NC_008800.1"/>
</dbReference>
<dbReference type="SMR" id="A1JMW1"/>
<dbReference type="GeneID" id="31408628"/>
<dbReference type="KEGG" id="yen:YE1592"/>
<dbReference type="PATRIC" id="fig|393305.7.peg.1722"/>
<dbReference type="eggNOG" id="COG3785">
    <property type="taxonomic scope" value="Bacteria"/>
</dbReference>
<dbReference type="HOGENOM" id="CLU_123865_1_0_6"/>
<dbReference type="OrthoDB" id="9806050at2"/>
<dbReference type="Proteomes" id="UP000000642">
    <property type="component" value="Chromosome"/>
</dbReference>
<dbReference type="GO" id="GO:0005737">
    <property type="term" value="C:cytoplasm"/>
    <property type="evidence" value="ECO:0007669"/>
    <property type="project" value="UniProtKB-SubCell"/>
</dbReference>
<dbReference type="GO" id="GO:0003677">
    <property type="term" value="F:DNA binding"/>
    <property type="evidence" value="ECO:0007669"/>
    <property type="project" value="InterPro"/>
</dbReference>
<dbReference type="GO" id="GO:0009408">
    <property type="term" value="P:response to heat"/>
    <property type="evidence" value="ECO:0007669"/>
    <property type="project" value="UniProtKB-UniRule"/>
</dbReference>
<dbReference type="Gene3D" id="2.30.30.390">
    <property type="entry name" value="Hemimethylated DNA-binding domain"/>
    <property type="match status" value="1"/>
</dbReference>
<dbReference type="HAMAP" id="MF_01194">
    <property type="entry name" value="HspQ"/>
    <property type="match status" value="1"/>
</dbReference>
<dbReference type="InterPro" id="IPR011722">
    <property type="entry name" value="Hemimethylated_DNA-bd_dom"/>
</dbReference>
<dbReference type="InterPro" id="IPR036623">
    <property type="entry name" value="Hemimethylated_DNA-bd_sf"/>
</dbReference>
<dbReference type="InterPro" id="IPR022866">
    <property type="entry name" value="HspQ"/>
</dbReference>
<dbReference type="NCBIfam" id="NF010729">
    <property type="entry name" value="PRK14129.1"/>
    <property type="match status" value="1"/>
</dbReference>
<dbReference type="NCBIfam" id="TIGR02097">
    <property type="entry name" value="yccV"/>
    <property type="match status" value="1"/>
</dbReference>
<dbReference type="Pfam" id="PF08755">
    <property type="entry name" value="YccV-like"/>
    <property type="match status" value="1"/>
</dbReference>
<dbReference type="SMART" id="SM00992">
    <property type="entry name" value="YccV-like"/>
    <property type="match status" value="1"/>
</dbReference>
<dbReference type="SUPFAM" id="SSF141255">
    <property type="entry name" value="YccV-like"/>
    <property type="match status" value="1"/>
</dbReference>